<sequence length="595" mass="69198">MDTLHHRFQQFQKTIWFNIFCYLWTGIFSFLAFAPVSLTHFVWIAPFGFFWLSLKYHGKYKKLFFHGLLIGVVFYAISFHWIIHMAITFGNFPYVVAILILLFAGLLFGLKFPIFMMSFSFLSGKIGRHSVWVAGFCGLLSELIGPQLFPWYWGNLAAGNIILAQNAEITGVYGISFLVFIVSYTLFQSNPWHWKEIIHSKEKRKQYLRFITLPALLLLTFIVSGIFLFKKWENVKPVKSLNVLIVQPDAPLSFRDGREIKESIEALMARIEKLTDEGAVRLGKKPDLIVLPEAGVPFFSAHKTEITTKVRRMYWDRFDSLMFLLANRYKANVFFNEIDAGFKGAPSPRNLRYYNNNVLYDPNGDRRDSYQKKFLLMFGEYMPFDFLYELSQQTGRFEPGLTHNLIRYYTPRYYTLAEKEKSPKGRHLGWTDTETFNHEAVRSYYETTRTEVSETGKFLPLICYEVILPEFVREFRTAGNPEFIVNLTNDKWYGATTESDQHMELGRLRSIELRRWMVRSTNSGISANIDHLGRFVGNKKTGLMTAEALSETIDVIDSPPTFYTQYGNLIPWLMLFLTGIYYLNLLIGIRRGKSA</sequence>
<keyword id="KW-0012">Acyltransferase</keyword>
<keyword id="KW-0997">Cell inner membrane</keyword>
<keyword id="KW-1003">Cell membrane</keyword>
<keyword id="KW-0472">Membrane</keyword>
<keyword id="KW-1185">Reference proteome</keyword>
<keyword id="KW-0808">Transferase</keyword>
<keyword id="KW-0812">Transmembrane</keyword>
<keyword id="KW-1133">Transmembrane helix</keyword>
<protein>
    <recommendedName>
        <fullName evidence="1">Apolipoprotein N-acyltransferase 2</fullName>
        <shortName evidence="1">ALP N-acyltransferase 2</shortName>
        <ecNumber evidence="1">2.3.1.269</ecNumber>
    </recommendedName>
</protein>
<dbReference type="EC" id="2.3.1.269" evidence="1"/>
<dbReference type="EMBL" id="AE010300">
    <property type="protein sequence ID" value="AAN51276.2"/>
    <property type="status" value="ALT_INIT"/>
    <property type="molecule type" value="Genomic_DNA"/>
</dbReference>
<dbReference type="RefSeq" id="NP_714258.2">
    <property type="nucleotide sequence ID" value="NC_004342.2"/>
</dbReference>
<dbReference type="SMR" id="Q8EYY4"/>
<dbReference type="FunCoup" id="Q8EYY4">
    <property type="interactions" value="252"/>
</dbReference>
<dbReference type="STRING" id="189518.LA_4078"/>
<dbReference type="PaxDb" id="189518-LA_4078"/>
<dbReference type="EnsemblBacteria" id="AAN51276">
    <property type="protein sequence ID" value="AAN51276"/>
    <property type="gene ID" value="LA_4078"/>
</dbReference>
<dbReference type="KEGG" id="lil:LA_4078"/>
<dbReference type="PATRIC" id="fig|189518.3.peg.4041"/>
<dbReference type="HOGENOM" id="CLU_019563_3_1_12"/>
<dbReference type="InParanoid" id="Q8EYY4"/>
<dbReference type="OrthoDB" id="9804277at2"/>
<dbReference type="UniPathway" id="UPA00666"/>
<dbReference type="Proteomes" id="UP000001408">
    <property type="component" value="Chromosome I"/>
</dbReference>
<dbReference type="GO" id="GO:0005886">
    <property type="term" value="C:plasma membrane"/>
    <property type="evidence" value="ECO:0007669"/>
    <property type="project" value="UniProtKB-SubCell"/>
</dbReference>
<dbReference type="GO" id="GO:0016410">
    <property type="term" value="F:N-acyltransferase activity"/>
    <property type="evidence" value="ECO:0007669"/>
    <property type="project" value="UniProtKB-UniRule"/>
</dbReference>
<dbReference type="GO" id="GO:0042158">
    <property type="term" value="P:lipoprotein biosynthetic process"/>
    <property type="evidence" value="ECO:0007669"/>
    <property type="project" value="UniProtKB-UniRule"/>
</dbReference>
<dbReference type="CDD" id="cd07571">
    <property type="entry name" value="ALP_N-acyl_transferase"/>
    <property type="match status" value="1"/>
</dbReference>
<dbReference type="Gene3D" id="3.60.110.10">
    <property type="entry name" value="Carbon-nitrogen hydrolase"/>
    <property type="match status" value="1"/>
</dbReference>
<dbReference type="HAMAP" id="MF_01148">
    <property type="entry name" value="Lnt"/>
    <property type="match status" value="1"/>
</dbReference>
<dbReference type="InterPro" id="IPR004563">
    <property type="entry name" value="Apolipo_AcylTrfase"/>
</dbReference>
<dbReference type="InterPro" id="IPR003010">
    <property type="entry name" value="C-N_Hydrolase"/>
</dbReference>
<dbReference type="InterPro" id="IPR036526">
    <property type="entry name" value="C-N_Hydrolase_sf"/>
</dbReference>
<dbReference type="InterPro" id="IPR045378">
    <property type="entry name" value="LNT_N"/>
</dbReference>
<dbReference type="PANTHER" id="PTHR38686">
    <property type="entry name" value="APOLIPOPROTEIN N-ACYLTRANSFERASE"/>
    <property type="match status" value="1"/>
</dbReference>
<dbReference type="PANTHER" id="PTHR38686:SF1">
    <property type="entry name" value="APOLIPOPROTEIN N-ACYLTRANSFERASE"/>
    <property type="match status" value="1"/>
</dbReference>
<dbReference type="Pfam" id="PF00795">
    <property type="entry name" value="CN_hydrolase"/>
    <property type="match status" value="1"/>
</dbReference>
<dbReference type="Pfam" id="PF20154">
    <property type="entry name" value="LNT_N"/>
    <property type="match status" value="1"/>
</dbReference>
<dbReference type="SUPFAM" id="SSF56317">
    <property type="entry name" value="Carbon-nitrogen hydrolase"/>
    <property type="match status" value="1"/>
</dbReference>
<dbReference type="PROSITE" id="PS50263">
    <property type="entry name" value="CN_HYDROLASE"/>
    <property type="match status" value="1"/>
</dbReference>
<accession>Q8EYY4</accession>
<reference key="1">
    <citation type="journal article" date="2003" name="Nature">
        <title>Unique physiological and pathogenic features of Leptospira interrogans revealed by whole-genome sequencing.</title>
        <authorList>
            <person name="Ren S.-X."/>
            <person name="Fu G."/>
            <person name="Jiang X.-G."/>
            <person name="Zeng R."/>
            <person name="Miao Y.-G."/>
            <person name="Xu H."/>
            <person name="Zhang Y.-X."/>
            <person name="Xiong H."/>
            <person name="Lu G."/>
            <person name="Lu L.-F."/>
            <person name="Jiang H.-Q."/>
            <person name="Jia J."/>
            <person name="Tu Y.-F."/>
            <person name="Jiang J.-X."/>
            <person name="Gu W.-Y."/>
            <person name="Zhang Y.-Q."/>
            <person name="Cai Z."/>
            <person name="Sheng H.-H."/>
            <person name="Yin H.-F."/>
            <person name="Zhang Y."/>
            <person name="Zhu G.-F."/>
            <person name="Wan M."/>
            <person name="Huang H.-L."/>
            <person name="Qian Z."/>
            <person name="Wang S.-Y."/>
            <person name="Ma W."/>
            <person name="Yao Z.-J."/>
            <person name="Shen Y."/>
            <person name="Qiang B.-Q."/>
            <person name="Xia Q.-C."/>
            <person name="Guo X.-K."/>
            <person name="Danchin A."/>
            <person name="Saint Girons I."/>
            <person name="Somerville R.L."/>
            <person name="Wen Y.-M."/>
            <person name="Shi M.-H."/>
            <person name="Chen Z."/>
            <person name="Xu J.-G."/>
            <person name="Zhao G.-P."/>
        </authorList>
    </citation>
    <scope>NUCLEOTIDE SEQUENCE [LARGE SCALE GENOMIC DNA]</scope>
    <source>
        <strain>56601</strain>
    </source>
</reference>
<reference key="2">
    <citation type="submission" date="2010-04" db="EMBL/GenBank/DDBJ databases">
        <authorList>
            <person name="Zhong Y."/>
            <person name="Zheng H.-J."/>
            <person name="Wang S.-Y."/>
            <person name="Guo X.-K."/>
            <person name="Zhao G.-P."/>
        </authorList>
    </citation>
    <scope>SEQUENCE REVISION TO 595</scope>
</reference>
<evidence type="ECO:0000255" key="1">
    <source>
        <dbReference type="HAMAP-Rule" id="MF_01148"/>
    </source>
</evidence>
<evidence type="ECO:0000305" key="2"/>
<organism>
    <name type="scientific">Leptospira interrogans serogroup Icterohaemorrhagiae serovar Lai (strain 56601)</name>
    <dbReference type="NCBI Taxonomy" id="189518"/>
    <lineage>
        <taxon>Bacteria</taxon>
        <taxon>Pseudomonadati</taxon>
        <taxon>Spirochaetota</taxon>
        <taxon>Spirochaetia</taxon>
        <taxon>Leptospirales</taxon>
        <taxon>Leptospiraceae</taxon>
        <taxon>Leptospira</taxon>
    </lineage>
</organism>
<name>LNT2_LEPIN</name>
<comment type="function">
    <text evidence="1">Catalyzes the phospholipid dependent N-acylation of the N-terminal cysteine of apolipoprotein, the last step in lipoprotein maturation.</text>
</comment>
<comment type="catalytic activity">
    <reaction evidence="1">
        <text>N-terminal S-1,2-diacyl-sn-glyceryl-L-cysteinyl-[lipoprotein] + a glycerophospholipid = N-acyl-S-1,2-diacyl-sn-glyceryl-L-cysteinyl-[lipoprotein] + a 2-acyl-sn-glycero-3-phospholipid + H(+)</text>
        <dbReference type="Rhea" id="RHEA:48228"/>
        <dbReference type="Rhea" id="RHEA-COMP:14681"/>
        <dbReference type="Rhea" id="RHEA-COMP:14684"/>
        <dbReference type="ChEBI" id="CHEBI:15378"/>
        <dbReference type="ChEBI" id="CHEBI:136912"/>
        <dbReference type="ChEBI" id="CHEBI:140656"/>
        <dbReference type="ChEBI" id="CHEBI:140657"/>
        <dbReference type="ChEBI" id="CHEBI:140660"/>
        <dbReference type="EC" id="2.3.1.269"/>
    </reaction>
</comment>
<comment type="pathway">
    <text evidence="1">Protein modification; lipoprotein biosynthesis (N-acyl transfer).</text>
</comment>
<comment type="subcellular location">
    <subcellularLocation>
        <location evidence="1">Cell inner membrane</location>
        <topology evidence="1">Multi-pass membrane protein</topology>
    </subcellularLocation>
</comment>
<comment type="similarity">
    <text evidence="1">Belongs to the CN hydrolase family. Apolipoprotein N-acyltransferase subfamily.</text>
</comment>
<comment type="sequence caution" evidence="2">
    <conflict type="erroneous initiation">
        <sequence resource="EMBL-CDS" id="AAN51276"/>
    </conflict>
    <text>Extended N-terminus.</text>
</comment>
<feature type="chain" id="PRO_0000178075" description="Apolipoprotein N-acyltransferase 2">
    <location>
        <begin position="1"/>
        <end position="595"/>
    </location>
</feature>
<feature type="transmembrane region" description="Helical" evidence="1">
    <location>
        <begin position="30"/>
        <end position="50"/>
    </location>
</feature>
<feature type="transmembrane region" description="Helical" evidence="1">
    <location>
        <begin position="63"/>
        <end position="83"/>
    </location>
</feature>
<feature type="transmembrane region" description="Helical" evidence="1">
    <location>
        <begin position="95"/>
        <end position="115"/>
    </location>
</feature>
<feature type="transmembrane region" description="Helical" evidence="1">
    <location>
        <begin position="167"/>
        <end position="187"/>
    </location>
</feature>
<feature type="transmembrane region" description="Helical" evidence="1">
    <location>
        <begin position="210"/>
        <end position="230"/>
    </location>
</feature>
<feature type="transmembrane region" description="Helical" evidence="1">
    <location>
        <begin position="569"/>
        <end position="589"/>
    </location>
</feature>
<feature type="domain" description="CN hydrolase" evidence="1">
    <location>
        <begin position="241"/>
        <end position="555"/>
    </location>
</feature>
<feature type="active site" description="Proton acceptor" evidence="1">
    <location>
        <position position="293"/>
    </location>
</feature>
<feature type="active site" evidence="1">
    <location>
        <position position="372"/>
    </location>
</feature>
<feature type="active site" description="Nucleophile" evidence="1">
    <location>
        <position position="463"/>
    </location>
</feature>
<proteinExistence type="inferred from homology"/>
<gene>
    <name evidence="1" type="primary">lnt2</name>
    <name type="ordered locus">LA_4078</name>
</gene>